<accession>Q47LL8</accession>
<evidence type="ECO:0000255" key="1">
    <source>
        <dbReference type="HAMAP-Rule" id="MF_00251"/>
    </source>
</evidence>
<evidence type="ECO:0000305" key="2"/>
<sequence>MKVKPSVKRICAKCRVIRRHGKIRVICEDPRHKQRQG</sequence>
<proteinExistence type="inferred from homology"/>
<dbReference type="EMBL" id="CP000088">
    <property type="protein sequence ID" value="AAZ56654.1"/>
    <property type="molecule type" value="Genomic_DNA"/>
</dbReference>
<dbReference type="SMR" id="Q47LL8"/>
<dbReference type="STRING" id="269800.Tfu_2621"/>
<dbReference type="KEGG" id="tfu:Tfu_2621"/>
<dbReference type="eggNOG" id="COG0257">
    <property type="taxonomic scope" value="Bacteria"/>
</dbReference>
<dbReference type="HOGENOM" id="CLU_135723_6_2_11"/>
<dbReference type="OrthoDB" id="9802520at2"/>
<dbReference type="GO" id="GO:0005737">
    <property type="term" value="C:cytoplasm"/>
    <property type="evidence" value="ECO:0007669"/>
    <property type="project" value="UniProtKB-ARBA"/>
</dbReference>
<dbReference type="GO" id="GO:1990904">
    <property type="term" value="C:ribonucleoprotein complex"/>
    <property type="evidence" value="ECO:0007669"/>
    <property type="project" value="UniProtKB-KW"/>
</dbReference>
<dbReference type="GO" id="GO:0005840">
    <property type="term" value="C:ribosome"/>
    <property type="evidence" value="ECO:0007669"/>
    <property type="project" value="UniProtKB-KW"/>
</dbReference>
<dbReference type="GO" id="GO:0003735">
    <property type="term" value="F:structural constituent of ribosome"/>
    <property type="evidence" value="ECO:0007669"/>
    <property type="project" value="InterPro"/>
</dbReference>
<dbReference type="GO" id="GO:0006412">
    <property type="term" value="P:translation"/>
    <property type="evidence" value="ECO:0007669"/>
    <property type="project" value="UniProtKB-UniRule"/>
</dbReference>
<dbReference type="HAMAP" id="MF_00251">
    <property type="entry name" value="Ribosomal_bL36"/>
    <property type="match status" value="1"/>
</dbReference>
<dbReference type="InterPro" id="IPR000473">
    <property type="entry name" value="Ribosomal_bL36"/>
</dbReference>
<dbReference type="InterPro" id="IPR035977">
    <property type="entry name" value="Ribosomal_bL36_sp"/>
</dbReference>
<dbReference type="NCBIfam" id="TIGR01022">
    <property type="entry name" value="rpmJ_bact"/>
    <property type="match status" value="1"/>
</dbReference>
<dbReference type="PANTHER" id="PTHR42888">
    <property type="entry name" value="50S RIBOSOMAL PROTEIN L36, CHLOROPLASTIC"/>
    <property type="match status" value="1"/>
</dbReference>
<dbReference type="PANTHER" id="PTHR42888:SF1">
    <property type="entry name" value="LARGE RIBOSOMAL SUBUNIT PROTEIN BL36C"/>
    <property type="match status" value="1"/>
</dbReference>
<dbReference type="Pfam" id="PF00444">
    <property type="entry name" value="Ribosomal_L36"/>
    <property type="match status" value="1"/>
</dbReference>
<dbReference type="SUPFAM" id="SSF57840">
    <property type="entry name" value="Ribosomal protein L36"/>
    <property type="match status" value="1"/>
</dbReference>
<dbReference type="PROSITE" id="PS00828">
    <property type="entry name" value="RIBOSOMAL_L36"/>
    <property type="match status" value="1"/>
</dbReference>
<organism>
    <name type="scientific">Thermobifida fusca (strain YX)</name>
    <dbReference type="NCBI Taxonomy" id="269800"/>
    <lineage>
        <taxon>Bacteria</taxon>
        <taxon>Bacillati</taxon>
        <taxon>Actinomycetota</taxon>
        <taxon>Actinomycetes</taxon>
        <taxon>Streptosporangiales</taxon>
        <taxon>Nocardiopsidaceae</taxon>
        <taxon>Thermobifida</taxon>
    </lineage>
</organism>
<protein>
    <recommendedName>
        <fullName evidence="1">Large ribosomal subunit protein bL36</fullName>
    </recommendedName>
    <alternativeName>
        <fullName evidence="2">50S ribosomal protein L36</fullName>
    </alternativeName>
</protein>
<feature type="chain" id="PRO_0000302325" description="Large ribosomal subunit protein bL36">
    <location>
        <begin position="1"/>
        <end position="37"/>
    </location>
</feature>
<gene>
    <name evidence="1" type="primary">rpmJ</name>
    <name type="ordered locus">Tfu_2621</name>
</gene>
<name>RL36_THEFY</name>
<comment type="similarity">
    <text evidence="1">Belongs to the bacterial ribosomal protein bL36 family.</text>
</comment>
<keyword id="KW-0687">Ribonucleoprotein</keyword>
<keyword id="KW-0689">Ribosomal protein</keyword>
<reference key="1">
    <citation type="journal article" date="2007" name="J. Bacteriol.">
        <title>Genome sequence and analysis of the soil cellulolytic actinomycete Thermobifida fusca YX.</title>
        <authorList>
            <person name="Lykidis A."/>
            <person name="Mavromatis K."/>
            <person name="Ivanova N."/>
            <person name="Anderson I."/>
            <person name="Land M."/>
            <person name="DiBartolo G."/>
            <person name="Martinez M."/>
            <person name="Lapidus A."/>
            <person name="Lucas S."/>
            <person name="Copeland A."/>
            <person name="Richardson P."/>
            <person name="Wilson D.B."/>
            <person name="Kyrpides N."/>
        </authorList>
    </citation>
    <scope>NUCLEOTIDE SEQUENCE [LARGE SCALE GENOMIC DNA]</scope>
    <source>
        <strain>YX</strain>
    </source>
</reference>